<dbReference type="EC" id="2.7.1.71" evidence="1"/>
<dbReference type="EMBL" id="CP000967">
    <property type="protein sequence ID" value="ACD60552.1"/>
    <property type="molecule type" value="Genomic_DNA"/>
</dbReference>
<dbReference type="RefSeq" id="WP_011258069.1">
    <property type="nucleotide sequence ID" value="NC_010717.2"/>
</dbReference>
<dbReference type="SMR" id="B2SK35"/>
<dbReference type="KEGG" id="xop:PXO_02182"/>
<dbReference type="eggNOG" id="COG0703">
    <property type="taxonomic scope" value="Bacteria"/>
</dbReference>
<dbReference type="HOGENOM" id="CLU_057607_3_2_6"/>
<dbReference type="UniPathway" id="UPA00053">
    <property type="reaction ID" value="UER00088"/>
</dbReference>
<dbReference type="Proteomes" id="UP000001740">
    <property type="component" value="Chromosome"/>
</dbReference>
<dbReference type="GO" id="GO:0005829">
    <property type="term" value="C:cytosol"/>
    <property type="evidence" value="ECO:0007669"/>
    <property type="project" value="TreeGrafter"/>
</dbReference>
<dbReference type="GO" id="GO:0005524">
    <property type="term" value="F:ATP binding"/>
    <property type="evidence" value="ECO:0007669"/>
    <property type="project" value="UniProtKB-UniRule"/>
</dbReference>
<dbReference type="GO" id="GO:0000287">
    <property type="term" value="F:magnesium ion binding"/>
    <property type="evidence" value="ECO:0007669"/>
    <property type="project" value="UniProtKB-UniRule"/>
</dbReference>
<dbReference type="GO" id="GO:0004765">
    <property type="term" value="F:shikimate kinase activity"/>
    <property type="evidence" value="ECO:0007669"/>
    <property type="project" value="UniProtKB-UniRule"/>
</dbReference>
<dbReference type="GO" id="GO:0008652">
    <property type="term" value="P:amino acid biosynthetic process"/>
    <property type="evidence" value="ECO:0007669"/>
    <property type="project" value="UniProtKB-KW"/>
</dbReference>
<dbReference type="GO" id="GO:0009073">
    <property type="term" value="P:aromatic amino acid family biosynthetic process"/>
    <property type="evidence" value="ECO:0007669"/>
    <property type="project" value="UniProtKB-KW"/>
</dbReference>
<dbReference type="GO" id="GO:0009423">
    <property type="term" value="P:chorismate biosynthetic process"/>
    <property type="evidence" value="ECO:0007669"/>
    <property type="project" value="UniProtKB-UniRule"/>
</dbReference>
<dbReference type="CDD" id="cd00464">
    <property type="entry name" value="SK"/>
    <property type="match status" value="1"/>
</dbReference>
<dbReference type="Gene3D" id="3.40.50.300">
    <property type="entry name" value="P-loop containing nucleotide triphosphate hydrolases"/>
    <property type="match status" value="1"/>
</dbReference>
<dbReference type="HAMAP" id="MF_00109">
    <property type="entry name" value="Shikimate_kinase"/>
    <property type="match status" value="1"/>
</dbReference>
<dbReference type="InterPro" id="IPR027417">
    <property type="entry name" value="P-loop_NTPase"/>
</dbReference>
<dbReference type="InterPro" id="IPR031322">
    <property type="entry name" value="Shikimate/glucono_kinase"/>
</dbReference>
<dbReference type="InterPro" id="IPR000623">
    <property type="entry name" value="Shikimate_kinase/TSH1"/>
</dbReference>
<dbReference type="InterPro" id="IPR023000">
    <property type="entry name" value="Shikimate_kinase_CS"/>
</dbReference>
<dbReference type="PANTHER" id="PTHR21087">
    <property type="entry name" value="SHIKIMATE KINASE"/>
    <property type="match status" value="1"/>
</dbReference>
<dbReference type="PANTHER" id="PTHR21087:SF16">
    <property type="entry name" value="SHIKIMATE KINASE 1, CHLOROPLASTIC"/>
    <property type="match status" value="1"/>
</dbReference>
<dbReference type="Pfam" id="PF01202">
    <property type="entry name" value="SKI"/>
    <property type="match status" value="1"/>
</dbReference>
<dbReference type="PRINTS" id="PR01100">
    <property type="entry name" value="SHIKIMTKNASE"/>
</dbReference>
<dbReference type="SUPFAM" id="SSF52540">
    <property type="entry name" value="P-loop containing nucleoside triphosphate hydrolases"/>
    <property type="match status" value="1"/>
</dbReference>
<dbReference type="PROSITE" id="PS01128">
    <property type="entry name" value="SHIKIMATE_KINASE"/>
    <property type="match status" value="1"/>
</dbReference>
<evidence type="ECO:0000255" key="1">
    <source>
        <dbReference type="HAMAP-Rule" id="MF_00109"/>
    </source>
</evidence>
<name>AROK_XANOP</name>
<keyword id="KW-0028">Amino-acid biosynthesis</keyword>
<keyword id="KW-0057">Aromatic amino acid biosynthesis</keyword>
<keyword id="KW-0067">ATP-binding</keyword>
<keyword id="KW-0963">Cytoplasm</keyword>
<keyword id="KW-0418">Kinase</keyword>
<keyword id="KW-0460">Magnesium</keyword>
<keyword id="KW-0479">Metal-binding</keyword>
<keyword id="KW-0547">Nucleotide-binding</keyword>
<keyword id="KW-0808">Transferase</keyword>
<reference key="1">
    <citation type="journal article" date="2008" name="BMC Genomics">
        <title>Genome sequence and rapid evolution of the rice pathogen Xanthomonas oryzae pv. oryzae PXO99A.</title>
        <authorList>
            <person name="Salzberg S.L."/>
            <person name="Sommer D.D."/>
            <person name="Schatz M.C."/>
            <person name="Phillippy A.M."/>
            <person name="Rabinowicz P.D."/>
            <person name="Tsuge S."/>
            <person name="Furutani A."/>
            <person name="Ochiai H."/>
            <person name="Delcher A.L."/>
            <person name="Kelley D."/>
            <person name="Madupu R."/>
            <person name="Puiu D."/>
            <person name="Radune D."/>
            <person name="Shumway M."/>
            <person name="Trapnell C."/>
            <person name="Aparna G."/>
            <person name="Jha G."/>
            <person name="Pandey A."/>
            <person name="Patil P.B."/>
            <person name="Ishihara H."/>
            <person name="Meyer D.F."/>
            <person name="Szurek B."/>
            <person name="Verdier V."/>
            <person name="Koebnik R."/>
            <person name="Dow J.M."/>
            <person name="Ryan R.P."/>
            <person name="Hirata H."/>
            <person name="Tsuyumu S."/>
            <person name="Won Lee S."/>
            <person name="Seo Y.-S."/>
            <person name="Sriariyanum M."/>
            <person name="Ronald P.C."/>
            <person name="Sonti R.V."/>
            <person name="Van Sluys M.-A."/>
            <person name="Leach J.E."/>
            <person name="White F.F."/>
            <person name="Bogdanove A.J."/>
        </authorList>
    </citation>
    <scope>NUCLEOTIDE SEQUENCE [LARGE SCALE GENOMIC DNA]</scope>
    <source>
        <strain>PXO99A</strain>
    </source>
</reference>
<proteinExistence type="inferred from homology"/>
<feature type="chain" id="PRO_1000094432" description="Shikimate kinase">
    <location>
        <begin position="1"/>
        <end position="180"/>
    </location>
</feature>
<feature type="binding site" evidence="1">
    <location>
        <begin position="14"/>
        <end position="19"/>
    </location>
    <ligand>
        <name>ATP</name>
        <dbReference type="ChEBI" id="CHEBI:30616"/>
    </ligand>
</feature>
<feature type="binding site" evidence="1">
    <location>
        <position position="18"/>
    </location>
    <ligand>
        <name>Mg(2+)</name>
        <dbReference type="ChEBI" id="CHEBI:18420"/>
    </ligand>
</feature>
<feature type="binding site" evidence="1">
    <location>
        <position position="36"/>
    </location>
    <ligand>
        <name>substrate</name>
    </ligand>
</feature>
<feature type="binding site" evidence="1">
    <location>
        <position position="60"/>
    </location>
    <ligand>
        <name>substrate</name>
    </ligand>
</feature>
<feature type="binding site" evidence="1">
    <location>
        <position position="82"/>
    </location>
    <ligand>
        <name>substrate</name>
    </ligand>
</feature>
<feature type="binding site" evidence="1">
    <location>
        <position position="120"/>
    </location>
    <ligand>
        <name>ATP</name>
        <dbReference type="ChEBI" id="CHEBI:30616"/>
    </ligand>
</feature>
<feature type="binding site" evidence="1">
    <location>
        <position position="139"/>
    </location>
    <ligand>
        <name>substrate</name>
    </ligand>
</feature>
<accession>B2SK35</accession>
<organism>
    <name type="scientific">Xanthomonas oryzae pv. oryzae (strain PXO99A)</name>
    <dbReference type="NCBI Taxonomy" id="360094"/>
    <lineage>
        <taxon>Bacteria</taxon>
        <taxon>Pseudomonadati</taxon>
        <taxon>Pseudomonadota</taxon>
        <taxon>Gammaproteobacteria</taxon>
        <taxon>Lysobacterales</taxon>
        <taxon>Lysobacteraceae</taxon>
        <taxon>Xanthomonas</taxon>
    </lineage>
</organism>
<gene>
    <name evidence="1" type="primary">aroK</name>
    <name type="ordered locus">PXO_02182</name>
</gene>
<protein>
    <recommendedName>
        <fullName evidence="1">Shikimate kinase</fullName>
        <shortName evidence="1">SK</shortName>
        <ecNumber evidence="1">2.7.1.71</ecNumber>
    </recommendedName>
</protein>
<sequence length="180" mass="19765">MNPAPNLVMVGPMGAGKSCIGRRLAERFGLEFVDVDQAIVEQVGSSIPAIFAQHGEAGFRQHEADTLQALLEQDNKLISTGGGTVLDPHNRQRICARGFVVHLHVSVPTQLTRLARDRNRPLLQRADREQLLHAMAAHRTPLYHEVADLSLETDHFSPAEATAQLVLRLAAQWRMSSAPA</sequence>
<comment type="function">
    <text evidence="1">Catalyzes the specific phosphorylation of the 3-hydroxyl group of shikimic acid using ATP as a cosubstrate.</text>
</comment>
<comment type="catalytic activity">
    <reaction evidence="1">
        <text>shikimate + ATP = 3-phosphoshikimate + ADP + H(+)</text>
        <dbReference type="Rhea" id="RHEA:13121"/>
        <dbReference type="ChEBI" id="CHEBI:15378"/>
        <dbReference type="ChEBI" id="CHEBI:30616"/>
        <dbReference type="ChEBI" id="CHEBI:36208"/>
        <dbReference type="ChEBI" id="CHEBI:145989"/>
        <dbReference type="ChEBI" id="CHEBI:456216"/>
        <dbReference type="EC" id="2.7.1.71"/>
    </reaction>
</comment>
<comment type="cofactor">
    <cofactor evidence="1">
        <name>Mg(2+)</name>
        <dbReference type="ChEBI" id="CHEBI:18420"/>
    </cofactor>
    <text evidence="1">Binds 1 Mg(2+) ion per subunit.</text>
</comment>
<comment type="pathway">
    <text evidence="1">Metabolic intermediate biosynthesis; chorismate biosynthesis; chorismate from D-erythrose 4-phosphate and phosphoenolpyruvate: step 5/7.</text>
</comment>
<comment type="subunit">
    <text evidence="1">Monomer.</text>
</comment>
<comment type="subcellular location">
    <subcellularLocation>
        <location evidence="1">Cytoplasm</location>
    </subcellularLocation>
</comment>
<comment type="similarity">
    <text evidence="1">Belongs to the shikimate kinase family.</text>
</comment>